<dbReference type="SMR" id="P81612"/>
<dbReference type="GO" id="GO:0005576">
    <property type="term" value="C:extracellular region"/>
    <property type="evidence" value="ECO:0007669"/>
    <property type="project" value="UniProtKB-SubCell"/>
</dbReference>
<dbReference type="GO" id="GO:0042742">
    <property type="term" value="P:defense response to bacterium"/>
    <property type="evidence" value="ECO:0007669"/>
    <property type="project" value="UniProtKB-KW"/>
</dbReference>
<dbReference type="GO" id="GO:0051607">
    <property type="term" value="P:defense response to virus"/>
    <property type="evidence" value="ECO:0007669"/>
    <property type="project" value="UniProtKB-KW"/>
</dbReference>
<dbReference type="GO" id="GO:0045087">
    <property type="term" value="P:innate immune response"/>
    <property type="evidence" value="ECO:0007669"/>
    <property type="project" value="UniProtKB-KW"/>
</dbReference>
<dbReference type="GO" id="GO:0050688">
    <property type="term" value="P:regulation of defense response to virus"/>
    <property type="evidence" value="ECO:0007669"/>
    <property type="project" value="UniProtKB-KW"/>
</dbReference>
<accession>P81612</accession>
<reference key="1">
    <citation type="journal article" date="1996" name="J. Biol. Chem.">
        <title>Innate immunity. Isolation of several cysteine-rich antimicrobial peptides from the blood of a mollusc, Mytilus edulis.</title>
        <authorList>
            <person name="Charlet M."/>
            <person name="Chernysh S."/>
            <person name="Philippe H."/>
            <person name="Hetru C."/>
            <person name="Hoffman J.A."/>
            <person name="Bulet P."/>
        </authorList>
    </citation>
    <scope>PROTEIN SEQUENCE</scope>
    <scope>CHARACTERIZATION</scope>
    <scope>MASS SPECTROMETRY</scope>
    <source>
        <tissue>Blood</tissue>
    </source>
</reference>
<proteinExistence type="evidence at protein level"/>
<keyword id="KW-0044">Antibiotic</keyword>
<keyword id="KW-0929">Antimicrobial</keyword>
<keyword id="KW-0051">Antiviral defense</keyword>
<keyword id="KW-0930">Antiviral protein</keyword>
<keyword id="KW-0903">Direct protein sequencing</keyword>
<keyword id="KW-1015">Disulfide bond</keyword>
<keyword id="KW-0391">Immunity</keyword>
<keyword id="KW-0399">Innate immunity</keyword>
<keyword id="KW-0964">Secreted</keyword>
<sequence length="34" mass="3782">GCASRCKAKCAGRRCKGWASASFRGRCYCKCFRC</sequence>
<organism>
    <name type="scientific">Mytilus edulis</name>
    <name type="common">Blue mussel</name>
    <dbReference type="NCBI Taxonomy" id="6550"/>
    <lineage>
        <taxon>Eukaryota</taxon>
        <taxon>Metazoa</taxon>
        <taxon>Spiralia</taxon>
        <taxon>Lophotrochozoa</taxon>
        <taxon>Mollusca</taxon>
        <taxon>Bivalvia</taxon>
        <taxon>Autobranchia</taxon>
        <taxon>Pteriomorphia</taxon>
        <taxon>Mytilida</taxon>
        <taxon>Mytiloidea</taxon>
        <taxon>Mytilidae</taxon>
        <taxon>Mytilinae</taxon>
        <taxon>Mytilus</taxon>
    </lineage>
</organism>
<protein>
    <recommendedName>
        <fullName>Mytilin-A</fullName>
    </recommendedName>
</protein>
<comment type="function">
    <text>Has antibacterial activity against A.viridans, B.megaterium, M.luteus, E.faecalis, S.aureus and E.coli. It is active against the marine species A.carrageenovora, P.alginovora and C.drobachiensis.</text>
</comment>
<comment type="subcellular location">
    <subcellularLocation>
        <location>Secreted</location>
    </subcellularLocation>
</comment>
<comment type="mass spectrometry" mass="3773.7" method="MALDI" evidence="2"/>
<feature type="peptide" id="PRO_0000044690" description="Mytilin-A">
    <location>
        <begin position="1"/>
        <end position="34"/>
    </location>
</feature>
<feature type="disulfide bond" evidence="1">
    <location>
        <begin position="2"/>
        <end position="27"/>
    </location>
</feature>
<feature type="disulfide bond" evidence="1">
    <location>
        <begin position="6"/>
        <end position="29"/>
    </location>
</feature>
<feature type="disulfide bond" evidence="1">
    <location>
        <begin position="10"/>
        <end position="31"/>
    </location>
</feature>
<feature type="disulfide bond" evidence="1">
    <location>
        <begin position="15"/>
        <end position="34"/>
    </location>
</feature>
<name>MYTA_MYTED</name>
<evidence type="ECO:0000250" key="1"/>
<evidence type="ECO:0000269" key="2">
    <source>
    </source>
</evidence>